<organism>
    <name type="scientific">Caldanaerobacter subterraneus subsp. tengcongensis (strain DSM 15242 / JCM 11007 / NBRC 100824 / MB4)</name>
    <name type="common">Thermoanaerobacter tengcongensis</name>
    <dbReference type="NCBI Taxonomy" id="273068"/>
    <lineage>
        <taxon>Bacteria</taxon>
        <taxon>Bacillati</taxon>
        <taxon>Bacillota</taxon>
        <taxon>Clostridia</taxon>
        <taxon>Thermoanaerobacterales</taxon>
        <taxon>Thermoanaerobacteraceae</taxon>
        <taxon>Caldanaerobacter</taxon>
    </lineage>
</organism>
<proteinExistence type="inferred from homology"/>
<comment type="function">
    <text evidence="1">Required for maturation of 30S ribosomal subunits.</text>
</comment>
<comment type="subcellular location">
    <subcellularLocation>
        <location evidence="1">Cytoplasm</location>
    </subcellularLocation>
</comment>
<comment type="similarity">
    <text evidence="1">Belongs to the RimP family.</text>
</comment>
<gene>
    <name evidence="1" type="primary">rimP</name>
    <name type="ordered locus">TTE1397</name>
</gene>
<sequence length="151" mass="17796">MSRIEEITKELVMPILEENNFELVDVEYKKEGKHWYLRVYIDKEGGITLDDCQLVSEYLSDRLDEVDPIDHSYILEVSSPGLDRPLKTPRDFKRNLGKEVEVSLYQPIDKRKKFTGELLEFTGDKIILLCEGEKREFEMKNVRLVKPVIKF</sequence>
<name>RIMP_CALS4</name>
<dbReference type="EMBL" id="AE008691">
    <property type="protein sequence ID" value="AAM24619.1"/>
    <property type="molecule type" value="Genomic_DNA"/>
</dbReference>
<dbReference type="RefSeq" id="WP_011025682.1">
    <property type="nucleotide sequence ID" value="NC_003869.1"/>
</dbReference>
<dbReference type="SMR" id="Q8RA33"/>
<dbReference type="STRING" id="273068.TTE1397"/>
<dbReference type="KEGG" id="tte:TTE1397"/>
<dbReference type="eggNOG" id="COG0779">
    <property type="taxonomic scope" value="Bacteria"/>
</dbReference>
<dbReference type="HOGENOM" id="CLU_070525_2_0_9"/>
<dbReference type="OrthoDB" id="9805006at2"/>
<dbReference type="Proteomes" id="UP000000555">
    <property type="component" value="Chromosome"/>
</dbReference>
<dbReference type="GO" id="GO:0005829">
    <property type="term" value="C:cytosol"/>
    <property type="evidence" value="ECO:0007669"/>
    <property type="project" value="TreeGrafter"/>
</dbReference>
<dbReference type="GO" id="GO:0000028">
    <property type="term" value="P:ribosomal small subunit assembly"/>
    <property type="evidence" value="ECO:0007669"/>
    <property type="project" value="TreeGrafter"/>
</dbReference>
<dbReference type="GO" id="GO:0006412">
    <property type="term" value="P:translation"/>
    <property type="evidence" value="ECO:0007669"/>
    <property type="project" value="TreeGrafter"/>
</dbReference>
<dbReference type="CDD" id="cd01734">
    <property type="entry name" value="YlxS_C"/>
    <property type="match status" value="1"/>
</dbReference>
<dbReference type="FunFam" id="3.30.300.70:FF:000001">
    <property type="entry name" value="Ribosome maturation factor RimP"/>
    <property type="match status" value="1"/>
</dbReference>
<dbReference type="Gene3D" id="2.30.30.180">
    <property type="entry name" value="Ribosome maturation factor RimP, C-terminal domain"/>
    <property type="match status" value="1"/>
</dbReference>
<dbReference type="Gene3D" id="3.30.300.70">
    <property type="entry name" value="RimP-like superfamily, N-terminal"/>
    <property type="match status" value="1"/>
</dbReference>
<dbReference type="HAMAP" id="MF_01077">
    <property type="entry name" value="RimP"/>
    <property type="match status" value="1"/>
</dbReference>
<dbReference type="InterPro" id="IPR003728">
    <property type="entry name" value="Ribosome_maturation_RimP"/>
</dbReference>
<dbReference type="InterPro" id="IPR028998">
    <property type="entry name" value="RimP_C"/>
</dbReference>
<dbReference type="InterPro" id="IPR036847">
    <property type="entry name" value="RimP_C_sf"/>
</dbReference>
<dbReference type="InterPro" id="IPR028989">
    <property type="entry name" value="RimP_N"/>
</dbReference>
<dbReference type="InterPro" id="IPR035956">
    <property type="entry name" value="RimP_N_sf"/>
</dbReference>
<dbReference type="NCBIfam" id="NF000928">
    <property type="entry name" value="PRK00092.1-2"/>
    <property type="match status" value="1"/>
</dbReference>
<dbReference type="PANTHER" id="PTHR33867">
    <property type="entry name" value="RIBOSOME MATURATION FACTOR RIMP"/>
    <property type="match status" value="1"/>
</dbReference>
<dbReference type="PANTHER" id="PTHR33867:SF1">
    <property type="entry name" value="RIBOSOME MATURATION FACTOR RIMP"/>
    <property type="match status" value="1"/>
</dbReference>
<dbReference type="Pfam" id="PF17384">
    <property type="entry name" value="DUF150_C"/>
    <property type="match status" value="1"/>
</dbReference>
<dbReference type="Pfam" id="PF02576">
    <property type="entry name" value="RimP_N"/>
    <property type="match status" value="1"/>
</dbReference>
<dbReference type="SUPFAM" id="SSF74942">
    <property type="entry name" value="YhbC-like, C-terminal domain"/>
    <property type="match status" value="1"/>
</dbReference>
<dbReference type="SUPFAM" id="SSF75420">
    <property type="entry name" value="YhbC-like, N-terminal domain"/>
    <property type="match status" value="1"/>
</dbReference>
<evidence type="ECO:0000255" key="1">
    <source>
        <dbReference type="HAMAP-Rule" id="MF_01077"/>
    </source>
</evidence>
<protein>
    <recommendedName>
        <fullName evidence="1">Ribosome maturation factor RimP</fullName>
    </recommendedName>
</protein>
<reference key="1">
    <citation type="journal article" date="2002" name="Genome Res.">
        <title>A complete sequence of the T. tengcongensis genome.</title>
        <authorList>
            <person name="Bao Q."/>
            <person name="Tian Y."/>
            <person name="Li W."/>
            <person name="Xu Z."/>
            <person name="Xuan Z."/>
            <person name="Hu S."/>
            <person name="Dong W."/>
            <person name="Yang J."/>
            <person name="Chen Y."/>
            <person name="Xue Y."/>
            <person name="Xu Y."/>
            <person name="Lai X."/>
            <person name="Huang L."/>
            <person name="Dong X."/>
            <person name="Ma Y."/>
            <person name="Ling L."/>
            <person name="Tan H."/>
            <person name="Chen R."/>
            <person name="Wang J."/>
            <person name="Yu J."/>
            <person name="Yang H."/>
        </authorList>
    </citation>
    <scope>NUCLEOTIDE SEQUENCE [LARGE SCALE GENOMIC DNA]</scope>
    <source>
        <strain>DSM 15242 / JCM 11007 / NBRC 100824 / MB4</strain>
    </source>
</reference>
<keyword id="KW-0963">Cytoplasm</keyword>
<keyword id="KW-1185">Reference proteome</keyword>
<keyword id="KW-0690">Ribosome biogenesis</keyword>
<accession>Q8RA33</accession>
<feature type="chain" id="PRO_0000181946" description="Ribosome maturation factor RimP">
    <location>
        <begin position="1"/>
        <end position="151"/>
    </location>
</feature>